<accession>P0A1K9</accession>
<accession>P35534</accession>
<accession>Q8VSG8</accession>
<comment type="function">
    <text>Required for surface presentation of invasion plasmid antigens. Could play a role in preserving the translocation competence of the Ipa antigens. Required for invasion and for secretion of the three Ipa proteins.</text>
</comment>
<comment type="similarity">
    <text evidence="1">Belongs to the FliN/MopA/SpaO family.</text>
</comment>
<comment type="sequence caution" evidence="1">
    <conflict type="erroneous termination">
        <sequence resource="EMBL-CDS" id="AAL72304"/>
    </conflict>
    <text>Truncated C-terminus.</text>
</comment>
<proteinExistence type="evidence at protein level"/>
<protein>
    <recommendedName>
        <fullName>Surface presentation of antigens protein SpaO</fullName>
    </recommendedName>
    <alternativeName>
        <fullName>Spa33 protein</fullName>
    </alternativeName>
</protein>
<evidence type="ECO:0000305" key="1"/>
<evidence type="ECO:0007829" key="2">
    <source>
        <dbReference type="PDB" id="4TT9"/>
    </source>
</evidence>
<keyword id="KW-0002">3D-structure</keyword>
<keyword id="KW-0614">Plasmid</keyword>
<keyword id="KW-1185">Reference proteome</keyword>
<keyword id="KW-0843">Virulence</keyword>
<feature type="chain" id="PRO_0000184127" description="Surface presentation of antigens protein SpaO">
    <location>
        <begin position="1"/>
        <end position="293"/>
    </location>
</feature>
<feature type="sequence variant" description="In plasmid pCP301.">
    <original>L</original>
    <variation>I</variation>
    <location>
        <position position="13"/>
    </location>
</feature>
<feature type="sequence variant" description="In plasmid pMYSH6000 and plasmid pCP301.">
    <original>L</original>
    <variation>S</variation>
    <location>
        <position position="143"/>
    </location>
</feature>
<feature type="strand" evidence="2">
    <location>
        <begin position="224"/>
        <end position="238"/>
    </location>
</feature>
<feature type="helix" evidence="2">
    <location>
        <begin position="239"/>
        <end position="247"/>
    </location>
</feature>
<feature type="strand" evidence="2">
    <location>
        <begin position="250"/>
        <end position="253"/>
    </location>
</feature>
<feature type="turn" evidence="2">
    <location>
        <begin position="257"/>
        <end position="259"/>
    </location>
</feature>
<feature type="strand" evidence="2">
    <location>
        <begin position="261"/>
        <end position="265"/>
    </location>
</feature>
<feature type="strand" evidence="2">
    <location>
        <begin position="268"/>
        <end position="278"/>
    </location>
</feature>
<feature type="strand" evidence="2">
    <location>
        <begin position="281"/>
        <end position="288"/>
    </location>
</feature>
<organism>
    <name type="scientific">Shigella flexneri</name>
    <dbReference type="NCBI Taxonomy" id="623"/>
    <lineage>
        <taxon>Bacteria</taxon>
        <taxon>Pseudomonadati</taxon>
        <taxon>Pseudomonadota</taxon>
        <taxon>Gammaproteobacteria</taxon>
        <taxon>Enterobacterales</taxon>
        <taxon>Enterobacteriaceae</taxon>
        <taxon>Shigella</taxon>
    </lineage>
</organism>
<gene>
    <name type="primary">spaO</name>
    <name type="synonym">spa33</name>
    <name type="ordered locus">CP0152</name>
</gene>
<dbReference type="EMBL" id="M81458">
    <property type="protein sequence ID" value="AAA26543.1"/>
    <property type="molecule type" value="Genomic_DNA"/>
</dbReference>
<dbReference type="EMBL" id="D13663">
    <property type="protein sequence ID" value="BAA02828.1"/>
    <property type="molecule type" value="Genomic_DNA"/>
</dbReference>
<dbReference type="EMBL" id="AL391753">
    <property type="protein sequence ID" value="CAC05827.1"/>
    <property type="molecule type" value="Genomic_DNA"/>
</dbReference>
<dbReference type="EMBL" id="AF348706">
    <property type="protein sequence ID" value="AAK18471.1"/>
    <property type="molecule type" value="Genomic_DNA"/>
</dbReference>
<dbReference type="EMBL" id="AF386526">
    <property type="protein sequence ID" value="AAL72304.1"/>
    <property type="status" value="ALT_SEQ"/>
    <property type="molecule type" value="Genomic_DNA"/>
</dbReference>
<dbReference type="PIR" id="F49846">
    <property type="entry name" value="F49846"/>
</dbReference>
<dbReference type="RefSeq" id="NP_085315.1">
    <property type="nucleotide sequence ID" value="NC_002698.1"/>
</dbReference>
<dbReference type="RefSeq" id="NP_858285.1">
    <property type="nucleotide sequence ID" value="NC_004851.1"/>
</dbReference>
<dbReference type="RefSeq" id="WP_000944309.1">
    <property type="nucleotide sequence ID" value="NZ_WHSI01000037.1"/>
</dbReference>
<dbReference type="RefSeq" id="WP_000944310.1">
    <property type="nucleotide sequence ID" value="NZ_WPGS01000043.1"/>
</dbReference>
<dbReference type="RefSeq" id="YP_009062509.1">
    <property type="nucleotide sequence ID" value="NC_024996.1"/>
</dbReference>
<dbReference type="PDB" id="4TT9">
    <property type="method" value="X-ray"/>
    <property type="resolution" value="2.30 A"/>
    <property type="chains" value="A/B/C/D=208-293"/>
</dbReference>
<dbReference type="PDBsum" id="4TT9"/>
<dbReference type="SMR" id="P0A1K9"/>
<dbReference type="TCDB" id="3.A.6.1.2">
    <property type="family name" value="the type iii (virulence-related) secretory pathway (iiisp) family"/>
</dbReference>
<dbReference type="PaxDb" id="198214-CP0152"/>
<dbReference type="GeneID" id="1238000"/>
<dbReference type="KEGG" id="sfl:CP0152"/>
<dbReference type="PATRIC" id="fig|198214.7.peg.5397"/>
<dbReference type="HOGENOM" id="CLU_949621_0_0_6"/>
<dbReference type="EvolutionaryTrace" id="P0A1K9"/>
<dbReference type="PHI-base" id="PHI:9889"/>
<dbReference type="Proteomes" id="UP000001006">
    <property type="component" value="Plasmid pCP301"/>
</dbReference>
<dbReference type="GO" id="GO:0009306">
    <property type="term" value="P:protein secretion"/>
    <property type="evidence" value="ECO:0007669"/>
    <property type="project" value="InterPro"/>
</dbReference>
<dbReference type="Gene3D" id="2.30.330.10">
    <property type="entry name" value="SpoA-like"/>
    <property type="match status" value="1"/>
</dbReference>
<dbReference type="InterPro" id="IPR001543">
    <property type="entry name" value="FliN-like_C"/>
</dbReference>
<dbReference type="InterPro" id="IPR036429">
    <property type="entry name" value="SpoA-like_sf"/>
</dbReference>
<dbReference type="InterPro" id="IPR003283">
    <property type="entry name" value="T3SS_OMP_SpaO"/>
</dbReference>
<dbReference type="Pfam" id="PF01052">
    <property type="entry name" value="FliMN_C"/>
    <property type="match status" value="1"/>
</dbReference>
<dbReference type="PRINTS" id="PR01339">
    <property type="entry name" value="TYPE3OMOPROT"/>
</dbReference>
<dbReference type="SUPFAM" id="SSF101801">
    <property type="entry name" value="Surface presentation of antigens (SPOA)"/>
    <property type="match status" value="1"/>
</dbReference>
<geneLocation type="plasmid">
    <name>pWR100</name>
</geneLocation>
<geneLocation type="plasmid">
    <name>pWR501</name>
</geneLocation>
<geneLocation type="plasmid">
    <name>pMYSH6000</name>
</geneLocation>
<geneLocation type="plasmid">
    <name>pCP301</name>
</geneLocation>
<reference key="1">
    <citation type="journal article" date="1992" name="J. Bacteriol.">
        <title>Surface presentation of Shigella flexneri invasion plasmid antigens requires the products of the spa locus.</title>
        <authorList>
            <person name="Venkatesan M.M."/>
            <person name="Buysse J.M."/>
            <person name="Oaks E.V."/>
        </authorList>
    </citation>
    <scope>NUCLEOTIDE SEQUENCE [GENOMIC DNA]</scope>
    <source>
        <strain>M90T / Serotype 5a</strain>
        <plasmid>pWR100</plasmid>
    </source>
</reference>
<reference key="2">
    <citation type="journal article" date="1993" name="J. Bacteriol.">
        <title>Eight genes in region 5 that form an operon are essential for invasion of epithelial cells by Shigella flexneri 2a.</title>
        <authorList>
            <person name="Sasakawa C."/>
            <person name="Komatsu K."/>
            <person name="Tobe T."/>
            <person name="Suzuki T."/>
            <person name="Yoshikawa M."/>
        </authorList>
    </citation>
    <scope>NUCLEOTIDE SEQUENCE [GENOMIC DNA]</scope>
    <source>
        <strain>YSH6000 / Serotype 2a</strain>
        <plasmid>pMYSH6000</plasmid>
    </source>
</reference>
<reference key="3">
    <citation type="journal article" date="2000" name="Mol. Microbiol.">
        <title>The virulence plasmid pWR100 and the repertoire of proteins secreted by the type III secretion apparatus of Shigella flexneri.</title>
        <authorList>
            <person name="Buchrieser C."/>
            <person name="Glaser P."/>
            <person name="Rusniok C."/>
            <person name="Nedjari H."/>
            <person name="d'Hauteville H."/>
            <person name="Kunst F."/>
            <person name="Sansonetti P.J."/>
            <person name="Parsot C."/>
        </authorList>
    </citation>
    <scope>NUCLEOTIDE SEQUENCE [GENOMIC DNA]</scope>
    <source>
        <strain>M90T / Serotype 5a</strain>
        <plasmid>pWR100</plasmid>
    </source>
</reference>
<reference key="4">
    <citation type="journal article" date="2001" name="Infect. Immun.">
        <title>Complete DNA sequence and analysis of the large virulence plasmid of Shigella flexneri.</title>
        <authorList>
            <person name="Venkatesan M.M."/>
            <person name="Goldberg M.B."/>
            <person name="Rose D.J."/>
            <person name="Grotbeck E.J."/>
            <person name="Burland V."/>
            <person name="Blattner F.R."/>
        </authorList>
    </citation>
    <scope>NUCLEOTIDE SEQUENCE [GENOMIC DNA]</scope>
    <source>
        <strain>M90T / Serotype 5a</strain>
        <plasmid>pWR501</plasmid>
    </source>
</reference>
<reference key="5">
    <citation type="journal article" date="2002" name="Nucleic Acids Res.">
        <title>Genome sequence of Shigella flexneri 2a: insights into pathogenicity through comparison with genomes of Escherichia coli K12 and O157.</title>
        <authorList>
            <person name="Jin Q."/>
            <person name="Yuan Z."/>
            <person name="Xu J."/>
            <person name="Wang Y."/>
            <person name="Shen Y."/>
            <person name="Lu W."/>
            <person name="Wang J."/>
            <person name="Liu H."/>
            <person name="Yang J."/>
            <person name="Yang F."/>
            <person name="Zhang X."/>
            <person name="Zhang J."/>
            <person name="Yang G."/>
            <person name="Wu H."/>
            <person name="Qu D."/>
            <person name="Dong J."/>
            <person name="Sun L."/>
            <person name="Xue Y."/>
            <person name="Zhao A."/>
            <person name="Gao Y."/>
            <person name="Zhu J."/>
            <person name="Kan B."/>
            <person name="Ding K."/>
            <person name="Chen S."/>
            <person name="Cheng H."/>
            <person name="Yao Z."/>
            <person name="He B."/>
            <person name="Chen R."/>
            <person name="Ma D."/>
            <person name="Qiang B."/>
            <person name="Wen Y."/>
            <person name="Hou Y."/>
            <person name="Yu J."/>
        </authorList>
    </citation>
    <scope>NUCLEOTIDE SEQUENCE [LARGE SCALE GENOMIC DNA]</scope>
    <source>
        <strain>301 / Serotype 2a</strain>
        <plasmid>pCP301</plasmid>
    </source>
</reference>
<sequence length="293" mass="33418">MLRIKHFDANEKLQILYAKQLCERFSIQTFKNKFTGSESLVTLTSVCGDWVIRIDTLSFLKKKYEVFSGFSTQESLLHLSKCVFIESSSVFSIPELSDKITFRITNEIQYATTGSHLCCFSSSLGIIYFDKMPVLRNQVSLDLLHHLLEFCLGSSNVRLATLKRIRTGDIIIVQKLYNLLLCNQVIIGDYIVNDNNEAKINLSESNGESEHTEVSLALFNYDDINVKVDFILLEKNMTINELKMYVENELFKFPDDIVKHVNIKVNGSLVGHGELVSIEDGYGIEISSWMVKE</sequence>
<name>SPAO_SHIFL</name>